<name>RUVA_LEPBJ</name>
<accession>Q04RG9</accession>
<proteinExistence type="inferred from homology"/>
<reference key="1">
    <citation type="journal article" date="2006" name="Proc. Natl. Acad. Sci. U.S.A.">
        <title>Genome reduction in Leptospira borgpetersenii reflects limited transmission potential.</title>
        <authorList>
            <person name="Bulach D.M."/>
            <person name="Zuerner R.L."/>
            <person name="Wilson P."/>
            <person name="Seemann T."/>
            <person name="McGrath A."/>
            <person name="Cullen P.A."/>
            <person name="Davis J."/>
            <person name="Johnson M."/>
            <person name="Kuczek E."/>
            <person name="Alt D.P."/>
            <person name="Peterson-Burch B."/>
            <person name="Coppel R.L."/>
            <person name="Rood J.I."/>
            <person name="Davies J.K."/>
            <person name="Adler B."/>
        </authorList>
    </citation>
    <scope>NUCLEOTIDE SEQUENCE [LARGE SCALE GENOMIC DNA]</scope>
    <source>
        <strain>JB197</strain>
    </source>
</reference>
<feature type="chain" id="PRO_1000195151" description="Holliday junction branch migration complex subunit RuvA">
    <location>
        <begin position="1"/>
        <end position="212"/>
    </location>
</feature>
<feature type="region of interest" description="Domain I" evidence="1">
    <location>
        <begin position="1"/>
        <end position="66"/>
    </location>
</feature>
<feature type="region of interest" description="Domain II" evidence="1">
    <location>
        <begin position="67"/>
        <end position="145"/>
    </location>
</feature>
<feature type="region of interest" description="Flexible linker" evidence="1">
    <location>
        <begin position="146"/>
        <end position="162"/>
    </location>
</feature>
<feature type="region of interest" description="Domain III" evidence="1">
    <location>
        <begin position="163"/>
        <end position="212"/>
    </location>
</feature>
<organism>
    <name type="scientific">Leptospira borgpetersenii serovar Hardjo-bovis (strain JB197)</name>
    <dbReference type="NCBI Taxonomy" id="355277"/>
    <lineage>
        <taxon>Bacteria</taxon>
        <taxon>Pseudomonadati</taxon>
        <taxon>Spirochaetota</taxon>
        <taxon>Spirochaetia</taxon>
        <taxon>Leptospirales</taxon>
        <taxon>Leptospiraceae</taxon>
        <taxon>Leptospira</taxon>
    </lineage>
</organism>
<comment type="function">
    <text evidence="1">The RuvA-RuvB-RuvC complex processes Holliday junction (HJ) DNA during genetic recombination and DNA repair, while the RuvA-RuvB complex plays an important role in the rescue of blocked DNA replication forks via replication fork reversal (RFR). RuvA specifically binds to HJ cruciform DNA, conferring on it an open structure. The RuvB hexamer acts as an ATP-dependent pump, pulling dsDNA into and through the RuvAB complex. HJ branch migration allows RuvC to scan DNA until it finds its consensus sequence, where it cleaves and resolves the cruciform DNA.</text>
</comment>
<comment type="subunit">
    <text evidence="1">Homotetramer. Forms an RuvA(8)-RuvB(12)-Holliday junction (HJ) complex. HJ DNA is sandwiched between 2 RuvA tetramers; dsDNA enters through RuvA and exits via RuvB. An RuvB hexamer assembles on each DNA strand where it exits the tetramer. Each RuvB hexamer is contacted by two RuvA subunits (via domain III) on 2 adjacent RuvB subunits; this complex drives branch migration. In the full resolvosome a probable DNA-RuvA(4)-RuvB(12)-RuvC(2) complex forms which resolves the HJ.</text>
</comment>
<comment type="subcellular location">
    <subcellularLocation>
        <location evidence="1">Cytoplasm</location>
    </subcellularLocation>
</comment>
<comment type="domain">
    <text evidence="1">Has three domains with a flexible linker between the domains II and III and assumes an 'L' shape. Domain III is highly mobile and contacts RuvB.</text>
</comment>
<comment type="similarity">
    <text evidence="1">Belongs to the RuvA family.</text>
</comment>
<evidence type="ECO:0000255" key="1">
    <source>
        <dbReference type="HAMAP-Rule" id="MF_00031"/>
    </source>
</evidence>
<protein>
    <recommendedName>
        <fullName evidence="1">Holliday junction branch migration complex subunit RuvA</fullName>
    </recommendedName>
</protein>
<sequence length="212" mass="23738">MISGLKGTLKKLEVGYAHIETGGITYEVTISFKTYLELKSLPSHNEVQFQIFHAMNERGQKLFGFLTEQDKEFFKVIKGLQGIGELTALKILSFFSAEELYRIAQSGEAKELEKIPKVKGKTSEKIFFEVKQNLKKLELFLSGTSKEPSISLSSFSETPEEAALSRKREIAILGLVQLGFEEKTASKEVDKILKSSSPTDPGEIIREILKSL</sequence>
<gene>
    <name evidence="1" type="primary">ruvA</name>
    <name type="ordered locus">LBJ_1987</name>
</gene>
<keyword id="KW-0963">Cytoplasm</keyword>
<keyword id="KW-0227">DNA damage</keyword>
<keyword id="KW-0233">DNA recombination</keyword>
<keyword id="KW-0234">DNA repair</keyword>
<keyword id="KW-0238">DNA-binding</keyword>
<dbReference type="EMBL" id="CP000350">
    <property type="protein sequence ID" value="ABJ76501.1"/>
    <property type="molecule type" value="Genomic_DNA"/>
</dbReference>
<dbReference type="RefSeq" id="WP_011669855.1">
    <property type="nucleotide sequence ID" value="NC_008510.1"/>
</dbReference>
<dbReference type="SMR" id="Q04RG9"/>
<dbReference type="KEGG" id="lbj:LBJ_1987"/>
<dbReference type="HOGENOM" id="CLU_087936_3_1_12"/>
<dbReference type="Proteomes" id="UP000000656">
    <property type="component" value="Chromosome 1"/>
</dbReference>
<dbReference type="GO" id="GO:0005737">
    <property type="term" value="C:cytoplasm"/>
    <property type="evidence" value="ECO:0007669"/>
    <property type="project" value="UniProtKB-SubCell"/>
</dbReference>
<dbReference type="GO" id="GO:0009379">
    <property type="term" value="C:Holliday junction helicase complex"/>
    <property type="evidence" value="ECO:0007669"/>
    <property type="project" value="InterPro"/>
</dbReference>
<dbReference type="GO" id="GO:0048476">
    <property type="term" value="C:Holliday junction resolvase complex"/>
    <property type="evidence" value="ECO:0007669"/>
    <property type="project" value="UniProtKB-UniRule"/>
</dbReference>
<dbReference type="GO" id="GO:0005524">
    <property type="term" value="F:ATP binding"/>
    <property type="evidence" value="ECO:0007669"/>
    <property type="project" value="InterPro"/>
</dbReference>
<dbReference type="GO" id="GO:0000400">
    <property type="term" value="F:four-way junction DNA binding"/>
    <property type="evidence" value="ECO:0007669"/>
    <property type="project" value="UniProtKB-UniRule"/>
</dbReference>
<dbReference type="GO" id="GO:0009378">
    <property type="term" value="F:four-way junction helicase activity"/>
    <property type="evidence" value="ECO:0007669"/>
    <property type="project" value="InterPro"/>
</dbReference>
<dbReference type="GO" id="GO:0006310">
    <property type="term" value="P:DNA recombination"/>
    <property type="evidence" value="ECO:0007669"/>
    <property type="project" value="UniProtKB-UniRule"/>
</dbReference>
<dbReference type="GO" id="GO:0006281">
    <property type="term" value="P:DNA repair"/>
    <property type="evidence" value="ECO:0007669"/>
    <property type="project" value="UniProtKB-UniRule"/>
</dbReference>
<dbReference type="CDD" id="cd14332">
    <property type="entry name" value="UBA_RuvA_C"/>
    <property type="match status" value="1"/>
</dbReference>
<dbReference type="Gene3D" id="1.10.150.20">
    <property type="entry name" value="5' to 3' exonuclease, C-terminal subdomain"/>
    <property type="match status" value="1"/>
</dbReference>
<dbReference type="Gene3D" id="1.10.8.10">
    <property type="entry name" value="DNA helicase RuvA subunit, C-terminal domain"/>
    <property type="match status" value="1"/>
</dbReference>
<dbReference type="Gene3D" id="2.40.50.140">
    <property type="entry name" value="Nucleic acid-binding proteins"/>
    <property type="match status" value="1"/>
</dbReference>
<dbReference type="HAMAP" id="MF_00031">
    <property type="entry name" value="DNA_HJ_migration_RuvA"/>
    <property type="match status" value="1"/>
</dbReference>
<dbReference type="InterPro" id="IPR013849">
    <property type="entry name" value="DNA_helicase_Holl-junc_RuvA_I"/>
</dbReference>
<dbReference type="InterPro" id="IPR012340">
    <property type="entry name" value="NA-bd_OB-fold"/>
</dbReference>
<dbReference type="InterPro" id="IPR000085">
    <property type="entry name" value="RuvA"/>
</dbReference>
<dbReference type="InterPro" id="IPR010994">
    <property type="entry name" value="RuvA_2-like"/>
</dbReference>
<dbReference type="InterPro" id="IPR011114">
    <property type="entry name" value="RuvA_C"/>
</dbReference>
<dbReference type="InterPro" id="IPR036267">
    <property type="entry name" value="RuvA_C_sf"/>
</dbReference>
<dbReference type="NCBIfam" id="TIGR00084">
    <property type="entry name" value="ruvA"/>
    <property type="match status" value="1"/>
</dbReference>
<dbReference type="Pfam" id="PF01330">
    <property type="entry name" value="RuvA_N"/>
    <property type="match status" value="1"/>
</dbReference>
<dbReference type="SUPFAM" id="SSF46929">
    <property type="entry name" value="DNA helicase RuvA subunit, C-terminal domain"/>
    <property type="match status" value="1"/>
</dbReference>
<dbReference type="SUPFAM" id="SSF50249">
    <property type="entry name" value="Nucleic acid-binding proteins"/>
    <property type="match status" value="1"/>
</dbReference>
<dbReference type="SUPFAM" id="SSF47781">
    <property type="entry name" value="RuvA domain 2-like"/>
    <property type="match status" value="1"/>
</dbReference>